<comment type="function">
    <text evidence="2">Catalyzes the hydrolysis of glutamine to glutamate and ammonia as part of the biosynthesis of pyridoxal 5'-phosphate. The resulting ammonia molecule is channeled to the active site of pdx1.</text>
</comment>
<comment type="catalytic activity">
    <reaction evidence="2">
        <text>aldehydo-D-ribose 5-phosphate + D-glyceraldehyde 3-phosphate + L-glutamine = pyridoxal 5'-phosphate + L-glutamate + phosphate + 3 H2O + H(+)</text>
        <dbReference type="Rhea" id="RHEA:31507"/>
        <dbReference type="ChEBI" id="CHEBI:15377"/>
        <dbReference type="ChEBI" id="CHEBI:15378"/>
        <dbReference type="ChEBI" id="CHEBI:29985"/>
        <dbReference type="ChEBI" id="CHEBI:43474"/>
        <dbReference type="ChEBI" id="CHEBI:58273"/>
        <dbReference type="ChEBI" id="CHEBI:58359"/>
        <dbReference type="ChEBI" id="CHEBI:59776"/>
        <dbReference type="ChEBI" id="CHEBI:597326"/>
        <dbReference type="EC" id="4.3.3.6"/>
    </reaction>
</comment>
<comment type="catalytic activity">
    <reaction>
        <text>L-glutamine + H2O = L-glutamate + NH4(+)</text>
        <dbReference type="Rhea" id="RHEA:15889"/>
        <dbReference type="ChEBI" id="CHEBI:15377"/>
        <dbReference type="ChEBI" id="CHEBI:28938"/>
        <dbReference type="ChEBI" id="CHEBI:29985"/>
        <dbReference type="ChEBI" id="CHEBI:58359"/>
        <dbReference type="EC" id="3.5.1.2"/>
    </reaction>
</comment>
<comment type="pathway">
    <text evidence="2">Cofactor biosynthesis; pyridoxal 5'-phosphate biosynthesis.</text>
</comment>
<comment type="similarity">
    <text evidence="3">Belongs to the glutaminase PdxT/SNO family.</text>
</comment>
<evidence type="ECO:0000250" key="1">
    <source>
        <dbReference type="UniProtKB" id="P37528"/>
    </source>
</evidence>
<evidence type="ECO:0000250" key="2">
    <source>
        <dbReference type="UniProtKB" id="Q8LAD0"/>
    </source>
</evidence>
<evidence type="ECO:0000305" key="3"/>
<evidence type="ECO:0000312" key="4">
    <source>
        <dbReference type="EMBL" id="EAL63295.1"/>
    </source>
</evidence>
<name>PDX2_DICDI</name>
<keyword id="KW-0315">Glutamine amidotransferase</keyword>
<keyword id="KW-0378">Hydrolase</keyword>
<keyword id="KW-0456">Lyase</keyword>
<keyword id="KW-0663">Pyridoxal phosphate</keyword>
<keyword id="KW-1185">Reference proteome</keyword>
<feature type="chain" id="PRO_0000431780" description="Probable pyridoxal 5'-phosphate synthase subunit pdx2">
    <location>
        <begin position="1"/>
        <end position="248"/>
    </location>
</feature>
<feature type="active site" description="Nucleophile" evidence="1">
    <location>
        <position position="106"/>
    </location>
</feature>
<feature type="active site" description="Charge relay system" evidence="1">
    <location>
        <position position="221"/>
    </location>
</feature>
<feature type="active site" description="Charge relay system" evidence="1">
    <location>
        <position position="223"/>
    </location>
</feature>
<feature type="binding site" evidence="1">
    <location>
        <begin position="70"/>
        <end position="72"/>
    </location>
    <ligand>
        <name>L-glutamine</name>
        <dbReference type="ChEBI" id="CHEBI:58359"/>
    </ligand>
</feature>
<feature type="binding site" evidence="1">
    <location>
        <position position="136"/>
    </location>
    <ligand>
        <name>L-glutamine</name>
        <dbReference type="ChEBI" id="CHEBI:58359"/>
    </ligand>
</feature>
<feature type="binding site" evidence="1">
    <location>
        <begin position="174"/>
        <end position="175"/>
    </location>
    <ligand>
        <name>L-glutamine</name>
        <dbReference type="ChEBI" id="CHEBI:58359"/>
    </ligand>
</feature>
<organism>
    <name type="scientific">Dictyostelium discoideum</name>
    <name type="common">Social amoeba</name>
    <dbReference type="NCBI Taxonomy" id="44689"/>
    <lineage>
        <taxon>Eukaryota</taxon>
        <taxon>Amoebozoa</taxon>
        <taxon>Evosea</taxon>
        <taxon>Eumycetozoa</taxon>
        <taxon>Dictyostelia</taxon>
        <taxon>Dictyosteliales</taxon>
        <taxon>Dictyosteliaceae</taxon>
        <taxon>Dictyostelium</taxon>
    </lineage>
</organism>
<sequence>MEELIEENNIKIGVLALQGGFKEHVEMVKSIKHCFSECENKYKYSIIVQEVKSVSDIKKLNPHGIILPGGESTSMAIIASSNNDGENIFTFLKEYIKQGNFIWGTCAGSIMLSNNVDGQKVGGQSLIGGLDVLISRNYFGRQIDSFETKINLNLKFSKNNNNSILLENFEAIFIRAPAILDVIDKENVEIIGEYIVTKKDGTKEKVITAVKQNNIIASVFHPELTNDNRFHQYFVQLVLNNHLIKIKI</sequence>
<protein>
    <recommendedName>
        <fullName>Probable pyridoxal 5'-phosphate synthase subunit pdx2</fullName>
        <ecNumber evidence="2">4.3.3.6</ecNumber>
    </recommendedName>
    <alternativeName>
        <fullName>Pyridoxal 5'-phosphate synthase glutaminase subunit</fullName>
        <ecNumber evidence="2">3.5.1.2</ecNumber>
    </alternativeName>
</protein>
<accession>Q54J48</accession>
<gene>
    <name evidence="3" type="primary">pdx2</name>
    <name evidence="4" type="ORF">DDB_G0288305</name>
</gene>
<reference key="1">
    <citation type="journal article" date="2005" name="Nature">
        <title>The genome of the social amoeba Dictyostelium discoideum.</title>
        <authorList>
            <person name="Eichinger L."/>
            <person name="Pachebat J.A."/>
            <person name="Gloeckner G."/>
            <person name="Rajandream M.A."/>
            <person name="Sucgang R."/>
            <person name="Berriman M."/>
            <person name="Song J."/>
            <person name="Olsen R."/>
            <person name="Szafranski K."/>
            <person name="Xu Q."/>
            <person name="Tunggal B."/>
            <person name="Kummerfeld S."/>
            <person name="Madera M."/>
            <person name="Konfortov B.A."/>
            <person name="Rivero F."/>
            <person name="Bankier A.T."/>
            <person name="Lehmann R."/>
            <person name="Hamlin N."/>
            <person name="Davies R."/>
            <person name="Gaudet P."/>
            <person name="Fey P."/>
            <person name="Pilcher K."/>
            <person name="Chen G."/>
            <person name="Saunders D."/>
            <person name="Sodergren E.J."/>
            <person name="Davis P."/>
            <person name="Kerhornou A."/>
            <person name="Nie X."/>
            <person name="Hall N."/>
            <person name="Anjard C."/>
            <person name="Hemphill L."/>
            <person name="Bason N."/>
            <person name="Farbrother P."/>
            <person name="Desany B."/>
            <person name="Just E."/>
            <person name="Morio T."/>
            <person name="Rost R."/>
            <person name="Churcher C.M."/>
            <person name="Cooper J."/>
            <person name="Haydock S."/>
            <person name="van Driessche N."/>
            <person name="Cronin A."/>
            <person name="Goodhead I."/>
            <person name="Muzny D.M."/>
            <person name="Mourier T."/>
            <person name="Pain A."/>
            <person name="Lu M."/>
            <person name="Harper D."/>
            <person name="Lindsay R."/>
            <person name="Hauser H."/>
            <person name="James K.D."/>
            <person name="Quiles M."/>
            <person name="Madan Babu M."/>
            <person name="Saito T."/>
            <person name="Buchrieser C."/>
            <person name="Wardroper A."/>
            <person name="Felder M."/>
            <person name="Thangavelu M."/>
            <person name="Johnson D."/>
            <person name="Knights A."/>
            <person name="Loulseged H."/>
            <person name="Mungall K.L."/>
            <person name="Oliver K."/>
            <person name="Price C."/>
            <person name="Quail M.A."/>
            <person name="Urushihara H."/>
            <person name="Hernandez J."/>
            <person name="Rabbinowitsch E."/>
            <person name="Steffen D."/>
            <person name="Sanders M."/>
            <person name="Ma J."/>
            <person name="Kohara Y."/>
            <person name="Sharp S."/>
            <person name="Simmonds M.N."/>
            <person name="Spiegler S."/>
            <person name="Tivey A."/>
            <person name="Sugano S."/>
            <person name="White B."/>
            <person name="Walker D."/>
            <person name="Woodward J.R."/>
            <person name="Winckler T."/>
            <person name="Tanaka Y."/>
            <person name="Shaulsky G."/>
            <person name="Schleicher M."/>
            <person name="Weinstock G.M."/>
            <person name="Rosenthal A."/>
            <person name="Cox E.C."/>
            <person name="Chisholm R.L."/>
            <person name="Gibbs R.A."/>
            <person name="Loomis W.F."/>
            <person name="Platzer M."/>
            <person name="Kay R.R."/>
            <person name="Williams J.G."/>
            <person name="Dear P.H."/>
            <person name="Noegel A.A."/>
            <person name="Barrell B.G."/>
            <person name="Kuspa A."/>
        </authorList>
    </citation>
    <scope>NUCLEOTIDE SEQUENCE [LARGE SCALE GENOMIC DNA]</scope>
    <source>
        <strain>AX4</strain>
    </source>
</reference>
<reference key="2">
    <citation type="journal article" date="2006" name="Eur. J. Cell Biol.">
        <title>Identification and isolation of Dictyostelium microtubule-associated protein interactors by tandem affinity purification.</title>
        <authorList>
            <person name="Koch K.V."/>
            <person name="Reinders Y."/>
            <person name="Ho T.-H."/>
            <person name="Sickmann A."/>
            <person name="Graef R."/>
        </authorList>
    </citation>
    <scope>IDENTIFICATION BY MASS SPECTROMETRY [LARGE SCALE ANALYSIS]</scope>
    <source>
        <strain>AX2</strain>
    </source>
</reference>
<reference key="3">
    <citation type="journal article" date="2006" name="Mol. Cell. Proteomics">
        <title>Proteomics fingerprinting of phagosome maturation and evidence for the role of a Galpha during uptake.</title>
        <authorList>
            <person name="Gotthardt D."/>
            <person name="Blancheteau V."/>
            <person name="Bosserhoff A."/>
            <person name="Ruppert T."/>
            <person name="Delorenzi M."/>
            <person name="Soldati T."/>
        </authorList>
    </citation>
    <scope>IDENTIFICATION BY MASS SPECTROMETRY [LARGE SCALE ANALYSIS]</scope>
    <source>
        <strain>AX2</strain>
    </source>
</reference>
<dbReference type="EC" id="4.3.3.6" evidence="2"/>
<dbReference type="EC" id="3.5.1.2" evidence="2"/>
<dbReference type="EMBL" id="AAFI02000109">
    <property type="protein sequence ID" value="EAL63295.1"/>
    <property type="molecule type" value="Genomic_DNA"/>
</dbReference>
<dbReference type="RefSeq" id="XP_636799.1">
    <property type="nucleotide sequence ID" value="XM_631707.1"/>
</dbReference>
<dbReference type="SMR" id="Q54J48"/>
<dbReference type="FunCoup" id="Q54J48">
    <property type="interactions" value="91"/>
</dbReference>
<dbReference type="STRING" id="44689.Q54J48"/>
<dbReference type="MEROPS" id="C26.A35"/>
<dbReference type="PaxDb" id="44689-DDB0234061"/>
<dbReference type="EnsemblProtists" id="EAL63295">
    <property type="protein sequence ID" value="EAL63295"/>
    <property type="gene ID" value="DDB_G0288305"/>
</dbReference>
<dbReference type="GeneID" id="8626556"/>
<dbReference type="KEGG" id="ddi:DDB_G0288305"/>
<dbReference type="dictyBase" id="DDB_G0288305">
    <property type="gene designation" value="pdx2"/>
</dbReference>
<dbReference type="VEuPathDB" id="AmoebaDB:DDB_G0288305"/>
<dbReference type="eggNOG" id="KOG3210">
    <property type="taxonomic scope" value="Eukaryota"/>
</dbReference>
<dbReference type="HOGENOM" id="CLU_069674_0_0_1"/>
<dbReference type="InParanoid" id="Q54J48"/>
<dbReference type="OMA" id="GMIMLAD"/>
<dbReference type="PhylomeDB" id="Q54J48"/>
<dbReference type="UniPathway" id="UPA00245"/>
<dbReference type="PRO" id="PR:Q54J48"/>
<dbReference type="Proteomes" id="UP000002195">
    <property type="component" value="Chromosome 5"/>
</dbReference>
<dbReference type="GO" id="GO:0005829">
    <property type="term" value="C:cytosol"/>
    <property type="evidence" value="ECO:0000318"/>
    <property type="project" value="GO_Central"/>
</dbReference>
<dbReference type="GO" id="GO:1903600">
    <property type="term" value="C:glutaminase complex"/>
    <property type="evidence" value="ECO:0000318"/>
    <property type="project" value="GO_Central"/>
</dbReference>
<dbReference type="GO" id="GO:0045335">
    <property type="term" value="C:phagocytic vesicle"/>
    <property type="evidence" value="ECO:0007005"/>
    <property type="project" value="dictyBase"/>
</dbReference>
<dbReference type="GO" id="GO:0004359">
    <property type="term" value="F:glutaminase activity"/>
    <property type="evidence" value="ECO:0007669"/>
    <property type="project" value="UniProtKB-EC"/>
</dbReference>
<dbReference type="GO" id="GO:0036381">
    <property type="term" value="F:pyridoxal 5'-phosphate synthase (glutamine hydrolysing) activity"/>
    <property type="evidence" value="ECO:0007669"/>
    <property type="project" value="UniProtKB-EC"/>
</dbReference>
<dbReference type="GO" id="GO:0042823">
    <property type="term" value="P:pyridoxal phosphate biosynthetic process"/>
    <property type="evidence" value="ECO:0000318"/>
    <property type="project" value="GO_Central"/>
</dbReference>
<dbReference type="GO" id="GO:0008614">
    <property type="term" value="P:pyridoxine metabolic process"/>
    <property type="evidence" value="ECO:0000318"/>
    <property type="project" value="GO_Central"/>
</dbReference>
<dbReference type="CDD" id="cd01749">
    <property type="entry name" value="GATase1_PB"/>
    <property type="match status" value="1"/>
</dbReference>
<dbReference type="FunFam" id="3.40.50.880:FF:000041">
    <property type="entry name" value="Glutamine amidotransferase subunit pdxT, putative"/>
    <property type="match status" value="1"/>
</dbReference>
<dbReference type="Gene3D" id="3.40.50.880">
    <property type="match status" value="1"/>
</dbReference>
<dbReference type="InterPro" id="IPR029062">
    <property type="entry name" value="Class_I_gatase-like"/>
</dbReference>
<dbReference type="InterPro" id="IPR002161">
    <property type="entry name" value="PdxT/SNO"/>
</dbReference>
<dbReference type="InterPro" id="IPR021196">
    <property type="entry name" value="PdxT/SNO_CS"/>
</dbReference>
<dbReference type="NCBIfam" id="TIGR03800">
    <property type="entry name" value="PLP_synth_Pdx2"/>
    <property type="match status" value="1"/>
</dbReference>
<dbReference type="PANTHER" id="PTHR31559">
    <property type="entry name" value="PYRIDOXAL 5'-PHOSPHATE SYNTHASE SUBUNIT SNO"/>
    <property type="match status" value="1"/>
</dbReference>
<dbReference type="PANTHER" id="PTHR31559:SF0">
    <property type="entry name" value="PYRIDOXAL 5'-PHOSPHATE SYNTHASE SUBUNIT SNO1-RELATED"/>
    <property type="match status" value="1"/>
</dbReference>
<dbReference type="Pfam" id="PF01174">
    <property type="entry name" value="SNO"/>
    <property type="match status" value="1"/>
</dbReference>
<dbReference type="PIRSF" id="PIRSF005639">
    <property type="entry name" value="Glut_amidoT_SNO"/>
    <property type="match status" value="1"/>
</dbReference>
<dbReference type="SUPFAM" id="SSF52317">
    <property type="entry name" value="Class I glutamine amidotransferase-like"/>
    <property type="match status" value="1"/>
</dbReference>
<dbReference type="PROSITE" id="PS01236">
    <property type="entry name" value="PDXT_SNO_1"/>
    <property type="match status" value="1"/>
</dbReference>
<dbReference type="PROSITE" id="PS51130">
    <property type="entry name" value="PDXT_SNO_2"/>
    <property type="match status" value="1"/>
</dbReference>
<proteinExistence type="evidence at protein level"/>